<feature type="chain" id="PRO_0000169749" description="Uncharacterized protein YjfK">
    <location>
        <begin position="1"/>
        <end position="219"/>
    </location>
</feature>
<name>YJFK_ECOLI</name>
<accession>P39293</accession>
<accession>Q2M6C2</accession>
<dbReference type="EMBL" id="U14003">
    <property type="protein sequence ID" value="AAA97079.1"/>
    <property type="molecule type" value="Genomic_DNA"/>
</dbReference>
<dbReference type="EMBL" id="U00096">
    <property type="protein sequence ID" value="AAC77140.1"/>
    <property type="molecule type" value="Genomic_DNA"/>
</dbReference>
<dbReference type="EMBL" id="AP009048">
    <property type="protein sequence ID" value="BAE78184.1"/>
    <property type="molecule type" value="Genomic_DNA"/>
</dbReference>
<dbReference type="PIR" id="S56408">
    <property type="entry name" value="S56408"/>
</dbReference>
<dbReference type="RefSeq" id="NP_418604.1">
    <property type="nucleotide sequence ID" value="NC_000913.3"/>
</dbReference>
<dbReference type="RefSeq" id="WP_000012550.1">
    <property type="nucleotide sequence ID" value="NZ_LN832404.1"/>
</dbReference>
<dbReference type="BioGRID" id="4261344">
    <property type="interactions" value="6"/>
</dbReference>
<dbReference type="DIP" id="DIP-12589N"/>
<dbReference type="FunCoup" id="P39293">
    <property type="interactions" value="50"/>
</dbReference>
<dbReference type="IntAct" id="P39293">
    <property type="interactions" value="2"/>
</dbReference>
<dbReference type="STRING" id="511145.b4183"/>
<dbReference type="PaxDb" id="511145-b4183"/>
<dbReference type="EnsemblBacteria" id="AAC77140">
    <property type="protein sequence ID" value="AAC77140"/>
    <property type="gene ID" value="b4183"/>
</dbReference>
<dbReference type="GeneID" id="948702"/>
<dbReference type="KEGG" id="ecj:JW4141"/>
<dbReference type="KEGG" id="eco:b4183"/>
<dbReference type="KEGG" id="ecoc:C3026_22600"/>
<dbReference type="PATRIC" id="fig|511145.12.peg.4315"/>
<dbReference type="EchoBASE" id="EB2379"/>
<dbReference type="eggNOG" id="ENOG502ZAIQ">
    <property type="taxonomic scope" value="Bacteria"/>
</dbReference>
<dbReference type="HOGENOM" id="CLU_100935_1_0_6"/>
<dbReference type="InParanoid" id="P39293"/>
<dbReference type="OMA" id="RCLVIST"/>
<dbReference type="OrthoDB" id="6148994at2"/>
<dbReference type="PhylomeDB" id="P39293"/>
<dbReference type="BioCyc" id="EcoCyc:G7848-MONOMER"/>
<dbReference type="PRO" id="PR:P39293"/>
<dbReference type="Proteomes" id="UP000000625">
    <property type="component" value="Chromosome"/>
</dbReference>
<dbReference type="InterPro" id="IPR019621">
    <property type="entry name" value="DUF2491"/>
</dbReference>
<dbReference type="Pfam" id="PF10679">
    <property type="entry name" value="DUF2491"/>
    <property type="match status" value="1"/>
</dbReference>
<reference key="1">
    <citation type="journal article" date="1995" name="Nucleic Acids Res.">
        <title>Analysis of the Escherichia coli genome VI: DNA sequence of the region from 92.8 through 100 minutes.</title>
        <authorList>
            <person name="Burland V.D."/>
            <person name="Plunkett G. III"/>
            <person name="Sofia H.J."/>
            <person name="Daniels D.L."/>
            <person name="Blattner F.R."/>
        </authorList>
    </citation>
    <scope>NUCLEOTIDE SEQUENCE [LARGE SCALE GENOMIC DNA]</scope>
    <source>
        <strain>K12 / MG1655 / ATCC 47076</strain>
    </source>
</reference>
<reference key="2">
    <citation type="journal article" date="1997" name="Science">
        <title>The complete genome sequence of Escherichia coli K-12.</title>
        <authorList>
            <person name="Blattner F.R."/>
            <person name="Plunkett G. III"/>
            <person name="Bloch C.A."/>
            <person name="Perna N.T."/>
            <person name="Burland V."/>
            <person name="Riley M."/>
            <person name="Collado-Vides J."/>
            <person name="Glasner J.D."/>
            <person name="Rode C.K."/>
            <person name="Mayhew G.F."/>
            <person name="Gregor J."/>
            <person name="Davis N.W."/>
            <person name="Kirkpatrick H.A."/>
            <person name="Goeden M.A."/>
            <person name="Rose D.J."/>
            <person name="Mau B."/>
            <person name="Shao Y."/>
        </authorList>
    </citation>
    <scope>NUCLEOTIDE SEQUENCE [LARGE SCALE GENOMIC DNA]</scope>
    <source>
        <strain>K12 / MG1655 / ATCC 47076</strain>
    </source>
</reference>
<reference key="3">
    <citation type="journal article" date="2006" name="Mol. Syst. Biol.">
        <title>Highly accurate genome sequences of Escherichia coli K-12 strains MG1655 and W3110.</title>
        <authorList>
            <person name="Hayashi K."/>
            <person name="Morooka N."/>
            <person name="Yamamoto Y."/>
            <person name="Fujita K."/>
            <person name="Isono K."/>
            <person name="Choi S."/>
            <person name="Ohtsubo E."/>
            <person name="Baba T."/>
            <person name="Wanner B.L."/>
            <person name="Mori H."/>
            <person name="Horiuchi T."/>
        </authorList>
    </citation>
    <scope>NUCLEOTIDE SEQUENCE [LARGE SCALE GENOMIC DNA]</scope>
    <source>
        <strain>K12 / W3110 / ATCC 27325 / DSM 5911</strain>
    </source>
</reference>
<proteinExistence type="predicted"/>
<protein>
    <recommendedName>
        <fullName>Uncharacterized protein YjfK</fullName>
    </recommendedName>
</protein>
<sequence>MSGFFQRLFGKDNKPAIARGPLGLHLNSGFTLDTLAFRLLEDELLIALPGEEFTVAAVSHIDLGGGSQIFRYYTSGDEFLQINTTGGEDIDDIDDIKLFVYEESYGISKESHWREAINAKAMGAMTLNWQEKRWQRFFNSEEPGNIEPVYMLEKVENQNHAKWEVHNFTMGYQRQVTEDTYEYLLLNGEESFNDLGEPEWLFSRALGVDIPLTSLHIIG</sequence>
<gene>
    <name type="primary">yjfK</name>
    <name type="ordered locus">b4183</name>
    <name type="ordered locus">JW4141</name>
</gene>
<keyword id="KW-1185">Reference proteome</keyword>
<organism>
    <name type="scientific">Escherichia coli (strain K12)</name>
    <dbReference type="NCBI Taxonomy" id="83333"/>
    <lineage>
        <taxon>Bacteria</taxon>
        <taxon>Pseudomonadati</taxon>
        <taxon>Pseudomonadota</taxon>
        <taxon>Gammaproteobacteria</taxon>
        <taxon>Enterobacterales</taxon>
        <taxon>Enterobacteriaceae</taxon>
        <taxon>Escherichia</taxon>
    </lineage>
</organism>